<proteinExistence type="inferred from homology"/>
<reference key="1">
    <citation type="journal article" date="2002" name="Lancet">
        <title>Genome and virulence determinants of high virulence community-acquired MRSA.</title>
        <authorList>
            <person name="Baba T."/>
            <person name="Takeuchi F."/>
            <person name="Kuroda M."/>
            <person name="Yuzawa H."/>
            <person name="Aoki K."/>
            <person name="Oguchi A."/>
            <person name="Nagai Y."/>
            <person name="Iwama N."/>
            <person name="Asano K."/>
            <person name="Naimi T."/>
            <person name="Kuroda H."/>
            <person name="Cui L."/>
            <person name="Yamamoto K."/>
            <person name="Hiramatsu K."/>
        </authorList>
    </citation>
    <scope>NUCLEOTIDE SEQUENCE [LARGE SCALE GENOMIC DNA]</scope>
    <source>
        <strain>MW2</strain>
    </source>
</reference>
<name>PPAT_STAAW</name>
<feature type="chain" id="PRO_0000163842" description="Putative pyridoxal phosphate-dependent acyltransferase">
    <location>
        <begin position="1"/>
        <end position="395"/>
    </location>
</feature>
<feature type="binding site" evidence="1">
    <location>
        <begin position="110"/>
        <end position="111"/>
    </location>
    <ligand>
        <name>pyridoxal 5'-phosphate</name>
        <dbReference type="ChEBI" id="CHEBI:597326"/>
    </ligand>
</feature>
<feature type="binding site" evidence="1">
    <location>
        <position position="135"/>
    </location>
    <ligand>
        <name>substrate</name>
    </ligand>
</feature>
<feature type="binding site" evidence="1">
    <location>
        <position position="185"/>
    </location>
    <ligand>
        <name>pyridoxal 5'-phosphate</name>
        <dbReference type="ChEBI" id="CHEBI:597326"/>
    </ligand>
</feature>
<feature type="binding site" evidence="1">
    <location>
        <begin position="210"/>
        <end position="213"/>
    </location>
    <ligand>
        <name>pyridoxal 5'-phosphate</name>
        <dbReference type="ChEBI" id="CHEBI:597326"/>
    </ligand>
</feature>
<feature type="binding site" evidence="1">
    <location>
        <begin position="240"/>
        <end position="243"/>
    </location>
    <ligand>
        <name>pyridoxal 5'-phosphate</name>
        <dbReference type="ChEBI" id="CHEBI:597326"/>
    </ligand>
</feature>
<feature type="binding site" evidence="1">
    <location>
        <position position="357"/>
    </location>
    <ligand>
        <name>substrate</name>
    </ligand>
</feature>
<feature type="modified residue" description="N6-(pyridoxal phosphate)lysine" evidence="2">
    <location>
        <position position="243"/>
    </location>
</feature>
<comment type="cofactor">
    <cofactor evidence="1">
        <name>pyridoxal 5'-phosphate</name>
        <dbReference type="ChEBI" id="CHEBI:597326"/>
    </cofactor>
</comment>
<comment type="subunit">
    <text evidence="1">Homodimer.</text>
</comment>
<comment type="similarity">
    <text evidence="2">Belongs to the class-II pyridoxal-phosphate-dependent aminotransferase family.</text>
</comment>
<sequence length="395" mass="42892">MVQSLHEFLEENINYLKENGLYNEIDTIEGANGPEIKINGKSYINLSSNNYLGLATNEDLKSAAKAAIDTHGVGAGAVRTINGTLDLHDELEETLAKFKGTEAAIAYQSGFNCNMAAISAVMNKNDAILSDELNHASIIDGCRLSKAKIIRVNHSDMDDLRAKAKEAVESGQYNKVMYITDGVFSMDGDVAKLPEIVEIAEEFGLLTYVDDAHGSGVMGKGAGTVKHFGLQDKIDFQIGTLSKAIGVVGGYVAGTKELIDWLKAQSRPFLFSTSLAPGDTKAITEAVKKLMDSTELHDKLWDNAQYLKNGLSKLGYDTGESETPITPVIIGDEKTTQEFSKRLKDEGVYVKSIVFPTVPRGTGRVRNMPTAAHTKDMLDEAIAAYEKVGKEMKLI</sequence>
<protein>
    <recommendedName>
        <fullName>Putative pyridoxal phosphate-dependent acyltransferase</fullName>
        <ecNumber>2.3.1.-</ecNumber>
    </recommendedName>
</protein>
<gene>
    <name type="ordered locus">MW0505</name>
</gene>
<accession>Q8NXY3</accession>
<keyword id="KW-0663">Pyridoxal phosphate</keyword>
<keyword id="KW-0808">Transferase</keyword>
<evidence type="ECO:0000250" key="1"/>
<evidence type="ECO:0000305" key="2"/>
<dbReference type="EC" id="2.3.1.-"/>
<dbReference type="EMBL" id="BA000033">
    <property type="protein sequence ID" value="BAB94370.1"/>
    <property type="molecule type" value="Genomic_DNA"/>
</dbReference>
<dbReference type="RefSeq" id="WP_000250823.1">
    <property type="nucleotide sequence ID" value="NC_003923.1"/>
</dbReference>
<dbReference type="SMR" id="Q8NXY3"/>
<dbReference type="KEGG" id="sam:MW0505"/>
<dbReference type="HOGENOM" id="CLU_015846_11_0_9"/>
<dbReference type="GO" id="GO:0030170">
    <property type="term" value="F:pyridoxal phosphate binding"/>
    <property type="evidence" value="ECO:0007669"/>
    <property type="project" value="InterPro"/>
</dbReference>
<dbReference type="GO" id="GO:0016740">
    <property type="term" value="F:transferase activity"/>
    <property type="evidence" value="ECO:0007669"/>
    <property type="project" value="UniProtKB-KW"/>
</dbReference>
<dbReference type="GO" id="GO:0009058">
    <property type="term" value="P:biosynthetic process"/>
    <property type="evidence" value="ECO:0007669"/>
    <property type="project" value="InterPro"/>
</dbReference>
<dbReference type="CDD" id="cd06454">
    <property type="entry name" value="KBL_like"/>
    <property type="match status" value="1"/>
</dbReference>
<dbReference type="FunFam" id="3.40.640.10:FF:000006">
    <property type="entry name" value="5-aminolevulinate synthase, mitochondrial"/>
    <property type="match status" value="1"/>
</dbReference>
<dbReference type="Gene3D" id="3.90.1150.10">
    <property type="entry name" value="Aspartate Aminotransferase, domain 1"/>
    <property type="match status" value="1"/>
</dbReference>
<dbReference type="Gene3D" id="3.40.640.10">
    <property type="entry name" value="Type I PLP-dependent aspartate aminotransferase-like (Major domain)"/>
    <property type="match status" value="1"/>
</dbReference>
<dbReference type="InterPro" id="IPR001917">
    <property type="entry name" value="Aminotrans_II_pyridoxalP_BS"/>
</dbReference>
<dbReference type="InterPro" id="IPR004839">
    <property type="entry name" value="Aminotransferase_I/II_large"/>
</dbReference>
<dbReference type="InterPro" id="IPR050087">
    <property type="entry name" value="AON_synthase_class-II"/>
</dbReference>
<dbReference type="InterPro" id="IPR010962">
    <property type="entry name" value="AONS_Archaea/Firmicutes"/>
</dbReference>
<dbReference type="InterPro" id="IPR015424">
    <property type="entry name" value="PyrdxlP-dep_Trfase"/>
</dbReference>
<dbReference type="InterPro" id="IPR015421">
    <property type="entry name" value="PyrdxlP-dep_Trfase_major"/>
</dbReference>
<dbReference type="InterPro" id="IPR015422">
    <property type="entry name" value="PyrdxlP-dep_Trfase_small"/>
</dbReference>
<dbReference type="NCBIfam" id="TIGR01825">
    <property type="entry name" value="gly_Cac_T_rel"/>
    <property type="match status" value="1"/>
</dbReference>
<dbReference type="NCBIfam" id="NF005394">
    <property type="entry name" value="PRK06939.1"/>
    <property type="match status" value="1"/>
</dbReference>
<dbReference type="PANTHER" id="PTHR13693">
    <property type="entry name" value="CLASS II AMINOTRANSFERASE/8-AMINO-7-OXONONANOATE SYNTHASE"/>
    <property type="match status" value="1"/>
</dbReference>
<dbReference type="PANTHER" id="PTHR13693:SF3">
    <property type="entry name" value="LD36009P"/>
    <property type="match status" value="1"/>
</dbReference>
<dbReference type="Pfam" id="PF00155">
    <property type="entry name" value="Aminotran_1_2"/>
    <property type="match status" value="1"/>
</dbReference>
<dbReference type="SUPFAM" id="SSF53383">
    <property type="entry name" value="PLP-dependent transferases"/>
    <property type="match status" value="1"/>
</dbReference>
<dbReference type="PROSITE" id="PS00599">
    <property type="entry name" value="AA_TRANSFER_CLASS_2"/>
    <property type="match status" value="1"/>
</dbReference>
<organism>
    <name type="scientific">Staphylococcus aureus (strain MW2)</name>
    <dbReference type="NCBI Taxonomy" id="196620"/>
    <lineage>
        <taxon>Bacteria</taxon>
        <taxon>Bacillati</taxon>
        <taxon>Bacillota</taxon>
        <taxon>Bacilli</taxon>
        <taxon>Bacillales</taxon>
        <taxon>Staphylococcaceae</taxon>
        <taxon>Staphylococcus</taxon>
    </lineage>
</organism>